<sequence>MKKLKVVHYINNFFAGVGGEEKANIPPEMREGAVGPGMALAAALGDEAEVVATVICGDSYYGENMDSARKEILEMIKDAQPDAFVAGPAFNAGRYGVACGSIAKAVEEDLGIPSVTGMYVENPGVDMYRKDIQIIETGNSAADLRNSMPKLAKLVMKKAKGELVGPPEVEGYHMMGIRTNFFHEKRGSERAIDMLVNKLNGEKFETEYPMPVFDRVPPNPAVKDMSKVKVAIVTSGGIVPHDNPDRIESSSATRYGIYDITGMDSMSADDFTSIHGGYDRAFVVKDPNLVVPLDVMRDLEREGVIGELANYFVSTTGTGTSVGNAKGFGESFSKKLIEDGVGAVILTSTUGTCTRCGATMVKEIERAGIPVVHLATVVPISLTIGANRIVPAIGIPHPLGDPALDAKGDKKLRRELVMRGLKALQTEVDEQTVFEG</sequence>
<proteinExistence type="inferred from homology"/>
<accession>O86186</accession>
<comment type="function">
    <text>In the first step of sarcosine reductase, the substrate is bound to component PB via a Schiff base intermediate. Then the PB-activated substrate is nucleophilically attacked by the selenol anion of component PA to transform it to a carboxymethylated selenoether and the respective amine. By action of component PC, acetyl phosphate is formed, leaving component PA in its oxidized state. Finally component PA becomes reduced by the thioredoxin system to start a new catalytic cycle of reductive deamination.</text>
</comment>
<comment type="catalytic activity">
    <reaction>
        <text>acetyl phosphate + methylamine + [thioredoxin]-disulfide + H2O = sarcosine + [thioredoxin]-dithiol + phosphate + H(+)</text>
        <dbReference type="Rhea" id="RHEA:12825"/>
        <dbReference type="Rhea" id="RHEA-COMP:10698"/>
        <dbReference type="Rhea" id="RHEA-COMP:10700"/>
        <dbReference type="ChEBI" id="CHEBI:15377"/>
        <dbReference type="ChEBI" id="CHEBI:15378"/>
        <dbReference type="ChEBI" id="CHEBI:22191"/>
        <dbReference type="ChEBI" id="CHEBI:29950"/>
        <dbReference type="ChEBI" id="CHEBI:43474"/>
        <dbReference type="ChEBI" id="CHEBI:50058"/>
        <dbReference type="ChEBI" id="CHEBI:57433"/>
        <dbReference type="ChEBI" id="CHEBI:59338"/>
        <dbReference type="EC" id="1.21.4.3"/>
    </reaction>
</comment>
<comment type="subunit">
    <text>Heterotetramer of two alpha and two beta subunits. Component of the sarcosine reductase complex, together with components A and C. PB is substrate specific.</text>
</comment>
<comment type="similarity">
    <text evidence="1">Belongs to the GrdB/GrdF/GrdH family.</text>
</comment>
<comment type="sequence caution" evidence="1">
    <conflict type="erroneous termination">
        <sequence resource="EMBL-CDS" id="CAA76907"/>
    </conflict>
    <text>Truncated C-terminus.</text>
</comment>
<name>GRDF_PEPAC</name>
<evidence type="ECO:0000305" key="1"/>
<feature type="chain" id="PRO_0000087603" description="Sarcosine reductase complex component B subunit beta">
    <location>
        <begin position="1"/>
        <end position="436"/>
    </location>
</feature>
<feature type="active site">
    <location>
        <position position="350"/>
    </location>
</feature>
<feature type="non-standard amino acid" description="Selenocysteine" evidence="1">
    <location>
        <position position="350"/>
    </location>
</feature>
<organism>
    <name type="scientific">Peptoclostridium acidaminophilum</name>
    <name type="common">Eubacterium acidaminophilum</name>
    <dbReference type="NCBI Taxonomy" id="1731"/>
    <lineage>
        <taxon>Bacteria</taxon>
        <taxon>Bacillati</taxon>
        <taxon>Bacillota</taxon>
        <taxon>Clostridia</taxon>
        <taxon>Peptostreptococcales</taxon>
        <taxon>Peptoclostridiaceae</taxon>
        <taxon>Peptoclostridium</taxon>
    </lineage>
</organism>
<keyword id="KW-0560">Oxidoreductase</keyword>
<keyword id="KW-0712">Selenocysteine</keyword>
<dbReference type="EC" id="1.21.4.3"/>
<dbReference type="EMBL" id="Y17872">
    <property type="protein sequence ID" value="CAA76907.1"/>
    <property type="status" value="ALT_SEQ"/>
    <property type="molecule type" value="Genomic_DNA"/>
</dbReference>
<dbReference type="PIR" id="T08627">
    <property type="entry name" value="A59190"/>
</dbReference>
<dbReference type="GO" id="GO:0030700">
    <property type="term" value="C:glycine reductase complex"/>
    <property type="evidence" value="ECO:0007669"/>
    <property type="project" value="InterPro"/>
</dbReference>
<dbReference type="GO" id="GO:0030699">
    <property type="term" value="F:glycine reductase activity"/>
    <property type="evidence" value="ECO:0007669"/>
    <property type="project" value="InterPro"/>
</dbReference>
<dbReference type="GO" id="GO:0033794">
    <property type="term" value="F:sarcosine reductase activity"/>
    <property type="evidence" value="ECO:0007669"/>
    <property type="project" value="UniProtKB-EC"/>
</dbReference>
<dbReference type="InterPro" id="IPR010186">
    <property type="entry name" value="Gly_red_sel_B"/>
</dbReference>
<dbReference type="InterPro" id="IPR054959">
    <property type="entry name" value="Sarcosine_GrdF"/>
</dbReference>
<dbReference type="InterPro" id="IPR010187">
    <property type="entry name" value="Various_sel_PB"/>
</dbReference>
<dbReference type="NCBIfam" id="TIGR01917">
    <property type="entry name" value="gly_red_sel_B"/>
    <property type="match status" value="1"/>
</dbReference>
<dbReference type="NCBIfam" id="NF040794">
    <property type="entry name" value="sarcosine_GrdF"/>
    <property type="match status" value="1"/>
</dbReference>
<dbReference type="NCBIfam" id="TIGR01918">
    <property type="entry name" value="various_sel_PB"/>
    <property type="match status" value="1"/>
</dbReference>
<dbReference type="Pfam" id="PF07355">
    <property type="entry name" value="GRDB"/>
    <property type="match status" value="1"/>
</dbReference>
<protein>
    <recommendedName>
        <fullName>Sarcosine reductase complex component B subunit beta</fullName>
        <ecNumber>1.21.4.3</ecNumber>
    </recommendedName>
    <alternativeName>
        <fullName>Selenoprotein PB beta</fullName>
    </alternativeName>
</protein>
<gene>
    <name type="primary">grdF</name>
</gene>
<reference key="1">
    <citation type="submission" date="1998-08" db="EMBL/GenBank/DDBJ databases">
        <authorList>
            <person name="Sonntag D."/>
            <person name="Soehling B."/>
            <person name="Andreesen J.R."/>
        </authorList>
    </citation>
    <scope>NUCLEOTIDE SEQUENCE [GENOMIC DNA]</scope>
    <source>
        <strain>ATCC 49065 / DSM 3953 / al-2</strain>
    </source>
</reference>